<sequence>MNKVVVKNVTFGEGAPKICVPMVGKTVAALKEEAEMLQTIDLDVVEWRVDFFEDVKDLAKVEAALDEIRTILPETPILFTFRSAKEGGELAVGDEFYFELNETLASTGKIDLVDVELFNEETDVLRLIETAHKNNVKVVMSNHDFDKTPAKEEIVSRLTRMEALGADLPKIAVMPKSAGDVLTLLDATNTVSEKANQPIITMSMAGTGVISRLAGEVFGSAMTFGAAKKASAPGQIDVNELRHVLDLLHKQF</sequence>
<protein>
    <recommendedName>
        <fullName evidence="1">3-dehydroquinate dehydratase</fullName>
        <shortName evidence="1">3-dehydroquinase</shortName>
        <ecNumber evidence="1">4.2.1.10</ecNumber>
    </recommendedName>
    <alternativeName>
        <fullName evidence="1">Type I DHQase</fullName>
    </alternativeName>
    <alternativeName>
        <fullName evidence="1">Type I dehydroquinase</fullName>
        <shortName evidence="1">DHQ1</shortName>
    </alternativeName>
</protein>
<evidence type="ECO:0000255" key="1">
    <source>
        <dbReference type="HAMAP-Rule" id="MF_00214"/>
    </source>
</evidence>
<keyword id="KW-0028">Amino-acid biosynthesis</keyword>
<keyword id="KW-0057">Aromatic amino acid biosynthesis</keyword>
<keyword id="KW-0456">Lyase</keyword>
<keyword id="KW-0704">Schiff base</keyword>
<comment type="function">
    <text evidence="1">Involved in the third step of the chorismate pathway, which leads to the biosynthesis of aromatic amino acids. Catalyzes the cis-dehydration of 3-dehydroquinate (DHQ) and introduces the first double bond of the aromatic ring to yield 3-dehydroshikimate.</text>
</comment>
<comment type="catalytic activity">
    <reaction evidence="1">
        <text>3-dehydroquinate = 3-dehydroshikimate + H2O</text>
        <dbReference type="Rhea" id="RHEA:21096"/>
        <dbReference type="ChEBI" id="CHEBI:15377"/>
        <dbReference type="ChEBI" id="CHEBI:16630"/>
        <dbReference type="ChEBI" id="CHEBI:32364"/>
        <dbReference type="EC" id="4.2.1.10"/>
    </reaction>
</comment>
<comment type="pathway">
    <text evidence="1">Metabolic intermediate biosynthesis; chorismate biosynthesis; chorismate from D-erythrose 4-phosphate and phosphoenolpyruvate: step 3/7.</text>
</comment>
<comment type="subunit">
    <text evidence="1">Homodimer.</text>
</comment>
<comment type="similarity">
    <text evidence="1">Belongs to the type-I 3-dehydroquinase family.</text>
</comment>
<name>AROD_LISMF</name>
<reference key="1">
    <citation type="journal article" date="2004" name="Nucleic Acids Res.">
        <title>Whole genome comparisons of serotype 4b and 1/2a strains of the food-borne pathogen Listeria monocytogenes reveal new insights into the core genome components of this species.</title>
        <authorList>
            <person name="Nelson K.E."/>
            <person name="Fouts D.E."/>
            <person name="Mongodin E.F."/>
            <person name="Ravel J."/>
            <person name="DeBoy R.T."/>
            <person name="Kolonay J.F."/>
            <person name="Rasko D.A."/>
            <person name="Angiuoli S.V."/>
            <person name="Gill S.R."/>
            <person name="Paulsen I.T."/>
            <person name="Peterson J.D."/>
            <person name="White O."/>
            <person name="Nelson W.C."/>
            <person name="Nierman W.C."/>
            <person name="Beanan M.J."/>
            <person name="Brinkac L.M."/>
            <person name="Daugherty S.C."/>
            <person name="Dodson R.J."/>
            <person name="Durkin A.S."/>
            <person name="Madupu R."/>
            <person name="Haft D.H."/>
            <person name="Selengut J."/>
            <person name="Van Aken S.E."/>
            <person name="Khouri H.M."/>
            <person name="Fedorova N."/>
            <person name="Forberger H.A."/>
            <person name="Tran B."/>
            <person name="Kathariou S."/>
            <person name="Wonderling L.D."/>
            <person name="Uhlich G.A."/>
            <person name="Bayles D.O."/>
            <person name="Luchansky J.B."/>
            <person name="Fraser C.M."/>
        </authorList>
    </citation>
    <scope>NUCLEOTIDE SEQUENCE [LARGE SCALE GENOMIC DNA]</scope>
    <source>
        <strain>F2365</strain>
    </source>
</reference>
<feature type="chain" id="PRO_0000138800" description="3-dehydroquinate dehydratase">
    <location>
        <begin position="1"/>
        <end position="252"/>
    </location>
</feature>
<feature type="active site" description="Proton donor/acceptor" evidence="1">
    <location>
        <position position="143"/>
    </location>
</feature>
<feature type="active site" description="Schiff-base intermediate with substrate" evidence="1">
    <location>
        <position position="170"/>
    </location>
</feature>
<feature type="binding site" evidence="1">
    <location>
        <begin position="46"/>
        <end position="48"/>
    </location>
    <ligand>
        <name>3-dehydroquinate</name>
        <dbReference type="ChEBI" id="CHEBI:32364"/>
    </ligand>
</feature>
<feature type="binding site" evidence="1">
    <location>
        <position position="82"/>
    </location>
    <ligand>
        <name>3-dehydroquinate</name>
        <dbReference type="ChEBI" id="CHEBI:32364"/>
    </ligand>
</feature>
<feature type="binding site" evidence="1">
    <location>
        <position position="212"/>
    </location>
    <ligand>
        <name>3-dehydroquinate</name>
        <dbReference type="ChEBI" id="CHEBI:32364"/>
    </ligand>
</feature>
<feature type="binding site" evidence="1">
    <location>
        <position position="231"/>
    </location>
    <ligand>
        <name>3-dehydroquinate</name>
        <dbReference type="ChEBI" id="CHEBI:32364"/>
    </ligand>
</feature>
<feature type="binding site" evidence="1">
    <location>
        <position position="235"/>
    </location>
    <ligand>
        <name>3-dehydroquinate</name>
        <dbReference type="ChEBI" id="CHEBI:32364"/>
    </ligand>
</feature>
<dbReference type="EC" id="4.2.1.10" evidence="1"/>
<dbReference type="EMBL" id="AE017262">
    <property type="protein sequence ID" value="AAT03303.1"/>
    <property type="molecule type" value="Genomic_DNA"/>
</dbReference>
<dbReference type="RefSeq" id="WP_003727308.1">
    <property type="nucleotide sequence ID" value="NC_002973.6"/>
</dbReference>
<dbReference type="SMR" id="Q723F8"/>
<dbReference type="KEGG" id="lmf:LMOf2365_0521"/>
<dbReference type="HOGENOM" id="CLU_064444_0_0_9"/>
<dbReference type="UniPathway" id="UPA00053">
    <property type="reaction ID" value="UER00086"/>
</dbReference>
<dbReference type="GO" id="GO:0003855">
    <property type="term" value="F:3-dehydroquinate dehydratase activity"/>
    <property type="evidence" value="ECO:0007669"/>
    <property type="project" value="UniProtKB-UniRule"/>
</dbReference>
<dbReference type="GO" id="GO:0046279">
    <property type="term" value="P:3,4-dihydroxybenzoate biosynthetic process"/>
    <property type="evidence" value="ECO:0007669"/>
    <property type="project" value="UniProtKB-ARBA"/>
</dbReference>
<dbReference type="GO" id="GO:0008652">
    <property type="term" value="P:amino acid biosynthetic process"/>
    <property type="evidence" value="ECO:0007669"/>
    <property type="project" value="UniProtKB-KW"/>
</dbReference>
<dbReference type="GO" id="GO:0009073">
    <property type="term" value="P:aromatic amino acid family biosynthetic process"/>
    <property type="evidence" value="ECO:0007669"/>
    <property type="project" value="UniProtKB-KW"/>
</dbReference>
<dbReference type="GO" id="GO:0009423">
    <property type="term" value="P:chorismate biosynthetic process"/>
    <property type="evidence" value="ECO:0007669"/>
    <property type="project" value="UniProtKB-UniRule"/>
</dbReference>
<dbReference type="CDD" id="cd00502">
    <property type="entry name" value="DHQase_I"/>
    <property type="match status" value="1"/>
</dbReference>
<dbReference type="FunFam" id="3.20.20.70:FF:000047">
    <property type="entry name" value="3-dehydroquinate dehydratase"/>
    <property type="match status" value="1"/>
</dbReference>
<dbReference type="Gene3D" id="3.20.20.70">
    <property type="entry name" value="Aldolase class I"/>
    <property type="match status" value="1"/>
</dbReference>
<dbReference type="HAMAP" id="MF_00214">
    <property type="entry name" value="AroD"/>
    <property type="match status" value="1"/>
</dbReference>
<dbReference type="InterPro" id="IPR018508">
    <property type="entry name" value="3-dehydroquinate_DH_AS"/>
</dbReference>
<dbReference type="InterPro" id="IPR013785">
    <property type="entry name" value="Aldolase_TIM"/>
</dbReference>
<dbReference type="InterPro" id="IPR001381">
    <property type="entry name" value="DHquinase_I"/>
</dbReference>
<dbReference type="InterPro" id="IPR050146">
    <property type="entry name" value="Type-I_3-dehydroquinase"/>
</dbReference>
<dbReference type="NCBIfam" id="TIGR01093">
    <property type="entry name" value="aroD"/>
    <property type="match status" value="1"/>
</dbReference>
<dbReference type="PANTHER" id="PTHR43699">
    <property type="entry name" value="3-DEHYDROQUINATE DEHYDRATASE"/>
    <property type="match status" value="1"/>
</dbReference>
<dbReference type="PANTHER" id="PTHR43699:SF1">
    <property type="entry name" value="3-DEHYDROQUINATE DEHYDRATASE"/>
    <property type="match status" value="1"/>
</dbReference>
<dbReference type="Pfam" id="PF01487">
    <property type="entry name" value="DHquinase_I"/>
    <property type="match status" value="1"/>
</dbReference>
<dbReference type="SUPFAM" id="SSF51569">
    <property type="entry name" value="Aldolase"/>
    <property type="match status" value="1"/>
</dbReference>
<dbReference type="PROSITE" id="PS01028">
    <property type="entry name" value="DEHYDROQUINASE_I"/>
    <property type="match status" value="1"/>
</dbReference>
<accession>Q723F8</accession>
<proteinExistence type="inferred from homology"/>
<gene>
    <name evidence="1" type="primary">aroD</name>
    <name type="ordered locus">LMOf2365_0521</name>
</gene>
<organism>
    <name type="scientific">Listeria monocytogenes serotype 4b (strain F2365)</name>
    <dbReference type="NCBI Taxonomy" id="265669"/>
    <lineage>
        <taxon>Bacteria</taxon>
        <taxon>Bacillati</taxon>
        <taxon>Bacillota</taxon>
        <taxon>Bacilli</taxon>
        <taxon>Bacillales</taxon>
        <taxon>Listeriaceae</taxon>
        <taxon>Listeria</taxon>
    </lineage>
</organism>